<proteinExistence type="inferred from homology"/>
<comment type="function">
    <text evidence="1">Catalyzes the epimerization of the S- and R-forms of NAD(P)HX, a damaged form of NAD(P)H that is a result of enzymatic or heat-dependent hydration. This is a prerequisite for the S-specific NAD(P)H-hydrate dehydratase to allow the repair of both epimers of NAD(P)HX.</text>
</comment>
<comment type="catalytic activity">
    <reaction evidence="1">
        <text>(6R)-NADHX = (6S)-NADHX</text>
        <dbReference type="Rhea" id="RHEA:32215"/>
        <dbReference type="ChEBI" id="CHEBI:64074"/>
        <dbReference type="ChEBI" id="CHEBI:64075"/>
        <dbReference type="EC" id="5.1.99.6"/>
    </reaction>
</comment>
<comment type="catalytic activity">
    <reaction evidence="1">
        <text>(6R)-NADPHX = (6S)-NADPHX</text>
        <dbReference type="Rhea" id="RHEA:32227"/>
        <dbReference type="ChEBI" id="CHEBI:64076"/>
        <dbReference type="ChEBI" id="CHEBI:64077"/>
        <dbReference type="EC" id="5.1.99.6"/>
    </reaction>
</comment>
<comment type="cofactor">
    <cofactor evidence="1">
        <name>K(+)</name>
        <dbReference type="ChEBI" id="CHEBI:29103"/>
    </cofactor>
    <text evidence="1">Binds 1 potassium ion per subunit.</text>
</comment>
<comment type="similarity">
    <text evidence="1">Belongs to the NnrE/AIBP family.</text>
</comment>
<dbReference type="EC" id="5.1.99.6" evidence="1"/>
<dbReference type="EMBL" id="BX640447">
    <property type="protein sequence ID" value="CAE33929.1"/>
    <property type="molecule type" value="Genomic_DNA"/>
</dbReference>
<dbReference type="RefSeq" id="WP_010926817.1">
    <property type="nucleotide sequence ID" value="NC_002927.3"/>
</dbReference>
<dbReference type="SMR" id="Q7WGX4"/>
<dbReference type="KEGG" id="bbr:BB3437"/>
<dbReference type="eggNOG" id="COG0062">
    <property type="taxonomic scope" value="Bacteria"/>
</dbReference>
<dbReference type="HOGENOM" id="CLU_024853_0_2_4"/>
<dbReference type="Proteomes" id="UP000001027">
    <property type="component" value="Chromosome"/>
</dbReference>
<dbReference type="GO" id="GO:0046872">
    <property type="term" value="F:metal ion binding"/>
    <property type="evidence" value="ECO:0007669"/>
    <property type="project" value="UniProtKB-KW"/>
</dbReference>
<dbReference type="GO" id="GO:0052856">
    <property type="term" value="F:NAD(P)HX epimerase activity"/>
    <property type="evidence" value="ECO:0007669"/>
    <property type="project" value="UniProtKB-UniRule"/>
</dbReference>
<dbReference type="GO" id="GO:0000166">
    <property type="term" value="F:nucleotide binding"/>
    <property type="evidence" value="ECO:0007669"/>
    <property type="project" value="UniProtKB-KW"/>
</dbReference>
<dbReference type="Gene3D" id="3.40.50.10260">
    <property type="entry name" value="YjeF N-terminal domain"/>
    <property type="match status" value="1"/>
</dbReference>
<dbReference type="HAMAP" id="MF_01966">
    <property type="entry name" value="NADHX_epimerase"/>
    <property type="match status" value="1"/>
</dbReference>
<dbReference type="InterPro" id="IPR004443">
    <property type="entry name" value="YjeF_N_dom"/>
</dbReference>
<dbReference type="InterPro" id="IPR036652">
    <property type="entry name" value="YjeF_N_dom_sf"/>
</dbReference>
<dbReference type="NCBIfam" id="TIGR00197">
    <property type="entry name" value="yjeF_nterm"/>
    <property type="match status" value="1"/>
</dbReference>
<dbReference type="Pfam" id="PF03853">
    <property type="entry name" value="YjeF_N"/>
    <property type="match status" value="1"/>
</dbReference>
<dbReference type="SUPFAM" id="SSF64153">
    <property type="entry name" value="YjeF N-terminal domain-like"/>
    <property type="match status" value="1"/>
</dbReference>
<dbReference type="PROSITE" id="PS51385">
    <property type="entry name" value="YJEF_N"/>
    <property type="match status" value="1"/>
</dbReference>
<evidence type="ECO:0000255" key="1">
    <source>
        <dbReference type="HAMAP-Rule" id="MF_01966"/>
    </source>
</evidence>
<organism>
    <name type="scientific">Bordetella bronchiseptica (strain ATCC BAA-588 / NCTC 13252 / RB50)</name>
    <name type="common">Alcaligenes bronchisepticus</name>
    <dbReference type="NCBI Taxonomy" id="257310"/>
    <lineage>
        <taxon>Bacteria</taxon>
        <taxon>Pseudomonadati</taxon>
        <taxon>Pseudomonadota</taxon>
        <taxon>Betaproteobacteria</taxon>
        <taxon>Burkholderiales</taxon>
        <taxon>Alcaligenaceae</taxon>
        <taxon>Bordetella</taxon>
    </lineage>
</organism>
<accession>Q7WGX4</accession>
<name>NNRE_BORBR</name>
<gene>
    <name evidence="1" type="primary">nnrE</name>
    <name type="ordered locus">BB3437</name>
</gene>
<feature type="chain" id="PRO_0000416344" description="NAD(P)H-hydrate epimerase">
    <location>
        <begin position="1"/>
        <end position="228"/>
    </location>
</feature>
<feature type="domain" description="YjeF N-terminal" evidence="1">
    <location>
        <begin position="9"/>
        <end position="209"/>
    </location>
</feature>
<feature type="binding site" evidence="1">
    <location>
        <begin position="53"/>
        <end position="57"/>
    </location>
    <ligand>
        <name>(6S)-NADPHX</name>
        <dbReference type="ChEBI" id="CHEBI:64076"/>
    </ligand>
</feature>
<feature type="binding site" evidence="1">
    <location>
        <position position="54"/>
    </location>
    <ligand>
        <name>K(+)</name>
        <dbReference type="ChEBI" id="CHEBI:29103"/>
    </ligand>
</feature>
<feature type="binding site" evidence="1">
    <location>
        <position position="115"/>
    </location>
    <ligand>
        <name>K(+)</name>
        <dbReference type="ChEBI" id="CHEBI:29103"/>
    </ligand>
</feature>
<feature type="binding site" evidence="1">
    <location>
        <begin position="119"/>
        <end position="125"/>
    </location>
    <ligand>
        <name>(6S)-NADPHX</name>
        <dbReference type="ChEBI" id="CHEBI:64076"/>
    </ligand>
</feature>
<feature type="binding site" evidence="1">
    <location>
        <position position="148"/>
    </location>
    <ligand>
        <name>(6S)-NADPHX</name>
        <dbReference type="ChEBI" id="CHEBI:64076"/>
    </ligand>
</feature>
<feature type="binding site" evidence="1">
    <location>
        <position position="151"/>
    </location>
    <ligand>
        <name>K(+)</name>
        <dbReference type="ChEBI" id="CHEBI:29103"/>
    </ligand>
</feature>
<sequence length="228" mass="23162">MDIERVEQVRAVERLAHRRGLALMPRAGLAAADFVAARLPAGAQVLALAGPGNNGGDALVAATLLQARGYRVAVVMPAGPARLPDDARRAWQDWCAAGGQASADLPAHAPALVIDGLFGIGLARPLGGAWQGLIDQVNAWRVPVLALDVPSGLSAASGQPLGDPPGRPVRATWTLSFIGVPAALRAPGAAAWCGQQHLSLLGLTPAFLAEAVGPCGQATATAARRSGP</sequence>
<keyword id="KW-0413">Isomerase</keyword>
<keyword id="KW-0479">Metal-binding</keyword>
<keyword id="KW-0520">NAD</keyword>
<keyword id="KW-0521">NADP</keyword>
<keyword id="KW-0547">Nucleotide-binding</keyword>
<keyword id="KW-0630">Potassium</keyword>
<reference key="1">
    <citation type="journal article" date="2003" name="Nat. Genet.">
        <title>Comparative analysis of the genome sequences of Bordetella pertussis, Bordetella parapertussis and Bordetella bronchiseptica.</title>
        <authorList>
            <person name="Parkhill J."/>
            <person name="Sebaihia M."/>
            <person name="Preston A."/>
            <person name="Murphy L.D."/>
            <person name="Thomson N.R."/>
            <person name="Harris D.E."/>
            <person name="Holden M.T.G."/>
            <person name="Churcher C.M."/>
            <person name="Bentley S.D."/>
            <person name="Mungall K.L."/>
            <person name="Cerdeno-Tarraga A.-M."/>
            <person name="Temple L."/>
            <person name="James K.D."/>
            <person name="Harris B."/>
            <person name="Quail M.A."/>
            <person name="Achtman M."/>
            <person name="Atkin R."/>
            <person name="Baker S."/>
            <person name="Basham D."/>
            <person name="Bason N."/>
            <person name="Cherevach I."/>
            <person name="Chillingworth T."/>
            <person name="Collins M."/>
            <person name="Cronin A."/>
            <person name="Davis P."/>
            <person name="Doggett J."/>
            <person name="Feltwell T."/>
            <person name="Goble A."/>
            <person name="Hamlin N."/>
            <person name="Hauser H."/>
            <person name="Holroyd S."/>
            <person name="Jagels K."/>
            <person name="Leather S."/>
            <person name="Moule S."/>
            <person name="Norberczak H."/>
            <person name="O'Neil S."/>
            <person name="Ormond D."/>
            <person name="Price C."/>
            <person name="Rabbinowitsch E."/>
            <person name="Rutter S."/>
            <person name="Sanders M."/>
            <person name="Saunders D."/>
            <person name="Seeger K."/>
            <person name="Sharp S."/>
            <person name="Simmonds M."/>
            <person name="Skelton J."/>
            <person name="Squares R."/>
            <person name="Squares S."/>
            <person name="Stevens K."/>
            <person name="Unwin L."/>
            <person name="Whitehead S."/>
            <person name="Barrell B.G."/>
            <person name="Maskell D.J."/>
        </authorList>
    </citation>
    <scope>NUCLEOTIDE SEQUENCE [LARGE SCALE GENOMIC DNA]</scope>
    <source>
        <strain>ATCC BAA-588 / NCTC 13252 / RB50</strain>
    </source>
</reference>
<protein>
    <recommendedName>
        <fullName evidence="1">NAD(P)H-hydrate epimerase</fullName>
        <ecNumber evidence="1">5.1.99.6</ecNumber>
    </recommendedName>
    <alternativeName>
        <fullName evidence="1">NAD(P)HX epimerase</fullName>
    </alternativeName>
</protein>